<keyword id="KW-0002">3D-structure</keyword>
<keyword id="KW-0903">Direct protein sequencing</keyword>
<keyword id="KW-0521">NADP</keyword>
<keyword id="KW-0560">Oxidoreductase</keyword>
<evidence type="ECO:0000269" key="1">
    <source>
    </source>
</evidence>
<evidence type="ECO:0000269" key="2">
    <source>
    </source>
</evidence>
<evidence type="ECO:0000305" key="3"/>
<evidence type="ECO:0007829" key="4">
    <source>
        <dbReference type="PDB" id="2GLX"/>
    </source>
</evidence>
<name>AFR_ENSAD</name>
<dbReference type="EC" id="1.1.1.292"/>
<dbReference type="EMBL" id="DQ140417">
    <property type="protein sequence ID" value="ABA25865.1"/>
    <property type="molecule type" value="Genomic_DNA"/>
</dbReference>
<dbReference type="PDB" id="2GLX">
    <property type="method" value="X-ray"/>
    <property type="resolution" value="2.20 A"/>
    <property type="chains" value="A/B/C/D/E/F=2-333"/>
</dbReference>
<dbReference type="PDBsum" id="2GLX"/>
<dbReference type="SMR" id="Q2I8V6"/>
<dbReference type="KEGG" id="ag:ABA25865"/>
<dbReference type="BioCyc" id="MetaCyc:MONOMER-16296"/>
<dbReference type="BRENDA" id="1.1.1.292">
    <property type="organism ID" value="8538"/>
</dbReference>
<dbReference type="SABIO-RK" id="Q2I8V6"/>
<dbReference type="EvolutionaryTrace" id="Q2I8V6"/>
<dbReference type="GO" id="GO:0033712">
    <property type="term" value="F:1,5-anhydro-D-fructose reductase (1,5-anhydro-D-mannitol-forming) activity"/>
    <property type="evidence" value="ECO:0007669"/>
    <property type="project" value="UniProtKB-EC"/>
</dbReference>
<dbReference type="GO" id="GO:0000166">
    <property type="term" value="F:nucleotide binding"/>
    <property type="evidence" value="ECO:0007669"/>
    <property type="project" value="InterPro"/>
</dbReference>
<dbReference type="Gene3D" id="3.30.360.10">
    <property type="entry name" value="Dihydrodipicolinate Reductase, domain 2"/>
    <property type="match status" value="1"/>
</dbReference>
<dbReference type="Gene3D" id="3.40.50.720">
    <property type="entry name" value="NAD(P)-binding Rossmann-like Domain"/>
    <property type="match status" value="1"/>
</dbReference>
<dbReference type="InterPro" id="IPR000683">
    <property type="entry name" value="Gfo/Idh/MocA-like_OxRdtase_N"/>
</dbReference>
<dbReference type="InterPro" id="IPR050984">
    <property type="entry name" value="Gfo/Idh/MocA_domain"/>
</dbReference>
<dbReference type="InterPro" id="IPR055170">
    <property type="entry name" value="GFO_IDH_MocA-like_dom"/>
</dbReference>
<dbReference type="InterPro" id="IPR036291">
    <property type="entry name" value="NAD(P)-bd_dom_sf"/>
</dbReference>
<dbReference type="PANTHER" id="PTHR22604">
    <property type="entry name" value="OXIDOREDUCTASES"/>
    <property type="match status" value="1"/>
</dbReference>
<dbReference type="PANTHER" id="PTHR22604:SF105">
    <property type="entry name" value="TRANS-1,2-DIHYDROBENZENE-1,2-DIOL DEHYDROGENASE"/>
    <property type="match status" value="1"/>
</dbReference>
<dbReference type="Pfam" id="PF01408">
    <property type="entry name" value="GFO_IDH_MocA"/>
    <property type="match status" value="1"/>
</dbReference>
<dbReference type="Pfam" id="PF22725">
    <property type="entry name" value="GFO_IDH_MocA_C3"/>
    <property type="match status" value="1"/>
</dbReference>
<dbReference type="SUPFAM" id="SSF55347">
    <property type="entry name" value="Glyceraldehyde-3-phosphate dehydrogenase-like, C-terminal domain"/>
    <property type="match status" value="1"/>
</dbReference>
<dbReference type="SUPFAM" id="SSF51735">
    <property type="entry name" value="NAD(P)-binding Rossmann-fold domains"/>
    <property type="match status" value="1"/>
</dbReference>
<reference key="1">
    <citation type="journal article" date="2006" name="Appl. Environ. Microbiol.">
        <title>Catabolism of 1,5-anhydro-D-fructose in Sinorhizobium morelense S-30.7.5: discovery, characterization, and overexpression of a new 1,5-anhydro-D-fructose reductase and its application in sugar analysis and rare sugar synthesis.</title>
        <authorList>
            <person name="Kuehn A."/>
            <person name="Yu S."/>
            <person name="Giffhorn F."/>
        </authorList>
    </citation>
    <scope>NUCLEOTIDE SEQUENCE [GENOMIC DNA]</scope>
    <scope>PROTEIN SEQUENCE OF 1-25</scope>
    <scope>CATALYTIC ACTIVITY</scope>
    <scope>SUBSTRATE SPECIFICITY</scope>
    <scope>BIOPHYSICOCHEMICAL PROPERTIES</scope>
    <scope>MASS SPECTROMETRY</scope>
    <scope>SUBUNIT</scope>
    <source>
        <strain>S-30.7.5</strain>
    </source>
</reference>
<reference key="2">
    <citation type="journal article" date="2006" name="Biochemistry">
        <title>Crystal structure of NADP(H)-dependent 1,5-anhydro-D-fructose reductase from Sinorhizobium morelense at 2.2 A resolution: construction of a NADH-accepting mutant and its application in rare sugar synthesis.</title>
        <authorList>
            <person name="Dambe T.R."/>
            <person name="Kuhn A.M."/>
            <person name="Brossette T."/>
            <person name="Giffhorn F."/>
            <person name="Scheidig A.J."/>
        </authorList>
    </citation>
    <scope>X-RAY CRYSTALLOGRAPHY (2.2 ANGSTROMS) OF 2-333 IN COMPLEX WITH NADP</scope>
    <scope>MUTAGENESIS OF SER-10; ALA-13; SER-33; LYS-94; ASP-176; HIS-180 AND GLY-206</scope>
</reference>
<sequence length="333" mass="35010">MNRWGLIGASTIAREWVIGAIRATGGEVVSMMSTSAERGAAYATENGIGKSVTSVEELVGDPDVDAVYVSTTNELHREQTLAAIRAGKHVLCEKPLAMTLEDAREMVVAAREAGVVLGTNHHLRNAAAHRAMRDAIAEGRIGRPIAARVFHAVYLPPHLQGWRLERPEAGGGVILDITVHDADTLRFVLNDDPAEAVAISHSAGMGKEGVEDGVMGGVRFQSGVIAQFHDAFTTKFAETGFEVHGTEGSLIGRNVMTQKPVGTVTLRNAEGESQLPLDPANLYETALAAFHSAIEGHGQPSATGEDGVWSLATGLAVVKAAATGQAAEIETGL</sequence>
<feature type="chain" id="PRO_0000382696" description="1,5-anhydro-D-fructose reductase">
    <location>
        <begin position="1"/>
        <end position="333"/>
    </location>
</feature>
<feature type="binding site" evidence="2">
    <location>
        <begin position="9"/>
        <end position="12"/>
    </location>
    <ligand>
        <name>NADP(+)</name>
        <dbReference type="ChEBI" id="CHEBI:58349"/>
    </ligand>
</feature>
<feature type="binding site" evidence="2">
    <location>
        <begin position="33"/>
        <end position="34"/>
    </location>
    <ligand>
        <name>NADP(+)</name>
        <dbReference type="ChEBI" id="CHEBI:58349"/>
    </ligand>
</feature>
<feature type="binding site" evidence="2">
    <location>
        <position position="38"/>
    </location>
    <ligand>
        <name>NADP(+)</name>
        <dbReference type="ChEBI" id="CHEBI:58349"/>
    </ligand>
</feature>
<feature type="binding site" evidence="2">
    <location>
        <begin position="71"/>
        <end position="76"/>
    </location>
    <ligand>
        <name>NADP(+)</name>
        <dbReference type="ChEBI" id="CHEBI:58349"/>
    </ligand>
</feature>
<feature type="binding site" evidence="2">
    <location>
        <begin position="93"/>
        <end position="94"/>
    </location>
    <ligand>
        <name>NADP(+)</name>
        <dbReference type="ChEBI" id="CHEBI:58349"/>
    </ligand>
</feature>
<feature type="binding site" evidence="2">
    <location>
        <position position="120"/>
    </location>
    <ligand>
        <name>NADP(+)</name>
        <dbReference type="ChEBI" id="CHEBI:58349"/>
    </ligand>
</feature>
<feature type="binding site" evidence="2">
    <location>
        <begin position="162"/>
        <end position="163"/>
    </location>
    <ligand>
        <name>NADP(+)</name>
        <dbReference type="ChEBI" id="CHEBI:58349"/>
    </ligand>
</feature>
<feature type="binding site" evidence="2">
    <location>
        <position position="283"/>
    </location>
    <ligand>
        <name>NADP(+)</name>
        <dbReference type="ChEBI" id="CHEBI:58349"/>
    </ligand>
</feature>
<feature type="mutagenesis site" description="Almost no effect." evidence="2">
    <original>S</original>
    <variation>G</variation>
    <location>
        <position position="10"/>
    </location>
</feature>
<feature type="mutagenesis site" description="Can use NAD as cosubstrate as well as NADP." evidence="2">
    <original>A</original>
    <variation>G</variation>
    <location>
        <position position="13"/>
    </location>
</feature>
<feature type="mutagenesis site" description="No activity." evidence="2">
    <original>S</original>
    <variation>D</variation>
    <location>
        <position position="33"/>
    </location>
</feature>
<feature type="mutagenesis site" description="Less than 1% remaining activity." evidence="2">
    <original>K</original>
    <variation>G</variation>
    <location>
        <position position="94"/>
    </location>
</feature>
<feature type="mutagenesis site" description="Less than 1% remaining activity." evidence="2">
    <original>D</original>
    <variation>A</variation>
    <location>
        <position position="176"/>
    </location>
</feature>
<feature type="mutagenesis site" description="Less than 2% remaining activity." evidence="2">
    <original>H</original>
    <variation>A</variation>
    <location>
        <position position="180"/>
    </location>
</feature>
<feature type="mutagenesis site" description="No effect." evidence="2">
    <original>G</original>
    <variation>I</variation>
    <location>
        <position position="206"/>
    </location>
</feature>
<feature type="strand" evidence="4">
    <location>
        <begin position="3"/>
        <end position="8"/>
    </location>
</feature>
<feature type="helix" evidence="4">
    <location>
        <begin position="11"/>
        <end position="15"/>
    </location>
</feature>
<feature type="helix" evidence="4">
    <location>
        <begin position="17"/>
        <end position="23"/>
    </location>
</feature>
<feature type="strand" evidence="4">
    <location>
        <begin position="27"/>
        <end position="32"/>
    </location>
</feature>
<feature type="helix" evidence="4">
    <location>
        <begin position="36"/>
        <end position="45"/>
    </location>
</feature>
<feature type="helix" evidence="4">
    <location>
        <begin position="55"/>
        <end position="59"/>
    </location>
</feature>
<feature type="strand" evidence="4">
    <location>
        <begin position="66"/>
        <end position="69"/>
    </location>
</feature>
<feature type="helix" evidence="4">
    <location>
        <begin position="73"/>
        <end position="75"/>
    </location>
</feature>
<feature type="helix" evidence="4">
    <location>
        <begin position="76"/>
        <end position="85"/>
    </location>
</feature>
<feature type="strand" evidence="4">
    <location>
        <begin position="89"/>
        <end position="92"/>
    </location>
</feature>
<feature type="strand" evidence="4">
    <location>
        <begin position="94"/>
        <end position="96"/>
    </location>
</feature>
<feature type="helix" evidence="4">
    <location>
        <begin position="100"/>
        <end position="113"/>
    </location>
</feature>
<feature type="strand" evidence="4">
    <location>
        <begin position="117"/>
        <end position="119"/>
    </location>
</feature>
<feature type="helix" evidence="4">
    <location>
        <begin position="123"/>
        <end position="125"/>
    </location>
</feature>
<feature type="helix" evidence="4">
    <location>
        <begin position="127"/>
        <end position="137"/>
    </location>
</feature>
<feature type="turn" evidence="4">
    <location>
        <begin position="138"/>
        <end position="141"/>
    </location>
</feature>
<feature type="strand" evidence="4">
    <location>
        <begin position="142"/>
        <end position="152"/>
    </location>
</feature>
<feature type="helix" evidence="4">
    <location>
        <begin position="157"/>
        <end position="159"/>
    </location>
</feature>
<feature type="helix" evidence="4">
    <location>
        <begin position="162"/>
        <end position="164"/>
    </location>
</feature>
<feature type="turn" evidence="4">
    <location>
        <begin position="167"/>
        <end position="170"/>
    </location>
</feature>
<feature type="helix" evidence="4">
    <location>
        <begin position="173"/>
        <end position="176"/>
    </location>
</feature>
<feature type="helix" evidence="4">
    <location>
        <begin position="178"/>
        <end position="189"/>
    </location>
</feature>
<feature type="strand" evidence="4">
    <location>
        <begin position="193"/>
        <end position="201"/>
    </location>
</feature>
<feature type="strand" evidence="4">
    <location>
        <begin position="204"/>
        <end position="206"/>
    </location>
</feature>
<feature type="strand" evidence="4">
    <location>
        <begin position="212"/>
        <end position="220"/>
    </location>
</feature>
<feature type="strand" evidence="4">
    <location>
        <begin position="225"/>
        <end position="233"/>
    </location>
</feature>
<feature type="strand" evidence="4">
    <location>
        <begin position="240"/>
        <end position="247"/>
    </location>
</feature>
<feature type="strand" evidence="4">
    <location>
        <begin position="249"/>
        <end position="254"/>
    </location>
</feature>
<feature type="strand" evidence="4">
    <location>
        <begin position="256"/>
        <end position="260"/>
    </location>
</feature>
<feature type="strand" evidence="4">
    <location>
        <begin position="263"/>
        <end position="268"/>
    </location>
</feature>
<feature type="strand" evidence="4">
    <location>
        <begin position="271"/>
        <end position="274"/>
    </location>
</feature>
<feature type="helix" evidence="4">
    <location>
        <begin position="282"/>
        <end position="294"/>
    </location>
</feature>
<feature type="strand" evidence="4">
    <location>
        <begin position="301"/>
        <end position="303"/>
    </location>
</feature>
<feature type="helix" evidence="4">
    <location>
        <begin position="304"/>
        <end position="323"/>
    </location>
</feature>
<organism>
    <name type="scientific">Ensifer adhaerens</name>
    <name type="common">Sinorhizobium morelense</name>
    <dbReference type="NCBI Taxonomy" id="106592"/>
    <lineage>
        <taxon>Bacteria</taxon>
        <taxon>Pseudomonadati</taxon>
        <taxon>Pseudomonadota</taxon>
        <taxon>Alphaproteobacteria</taxon>
        <taxon>Hyphomicrobiales</taxon>
        <taxon>Rhizobiaceae</taxon>
        <taxon>Sinorhizobium/Ensifer group</taxon>
        <taxon>Ensifer</taxon>
    </lineage>
</organism>
<gene>
    <name type="primary">afr</name>
</gene>
<proteinExistence type="evidence at protein level"/>
<accession>Q2I8V6</accession>
<comment type="function">
    <text>Catalyzes the NADPH-specific reduction of 1,5-anhydro-D-fructose to 1,5-anhydro-D-mannitol. Also shows some activity against structurally related compounds such as 3-keto-1,5-anhydro-D-fructose, D-glucosone and D-xylosone. The enzyme cannot use NADH as cosubstrate.</text>
</comment>
<comment type="catalytic activity">
    <reaction evidence="1">
        <text>1,5-anhydro-D-mannitol + NADP(+) = 1,5-anhydro-D-fructose + NADPH + H(+)</text>
        <dbReference type="Rhea" id="RHEA:24208"/>
        <dbReference type="ChEBI" id="CHEBI:15378"/>
        <dbReference type="ChEBI" id="CHEBI:16715"/>
        <dbReference type="ChEBI" id="CHEBI:49182"/>
        <dbReference type="ChEBI" id="CHEBI:57783"/>
        <dbReference type="ChEBI" id="CHEBI:58349"/>
        <dbReference type="EC" id="1.1.1.292"/>
    </reaction>
</comment>
<comment type="biophysicochemical properties">
    <kinetics>
        <KM evidence="1">8.4 mM for 1,5-anhydro-D-fructose</KM>
        <KM evidence="1">11 mM for D-glucosone</KM>
        <KM evidence="1">0.2 mM for NADPH</KM>
        <Vmax evidence="1">500.0 umol/min/mg enzyme</Vmax>
    </kinetics>
    <phDependence>
        <text evidence="1">Optimum pH is 6.5 at 30 degrees Celsius.</text>
    </phDependence>
</comment>
<comment type="subunit">
    <text evidence="1 2">Monomer.</text>
</comment>
<comment type="mass spectrometry" mass="35100.0" error="130.0" method="MALDI" evidence="1"/>
<comment type="similarity">
    <text evidence="3">Belongs to the Gfo/Idh/MocA family.</text>
</comment>
<protein>
    <recommendedName>
        <fullName>1,5-anhydro-D-fructose reductase</fullName>
        <shortName>Anhydrofructose reductase</shortName>
        <ecNumber>1.1.1.292</ecNumber>
    </recommendedName>
    <alternativeName>
        <fullName>1,5-anhydro-D-fructose reductase (1,5-anhydro-D-mannitol-forming)</fullName>
    </alternativeName>
</protein>